<name>MDH_SALMU</name>
<reference key="1">
    <citation type="journal article" date="1994" name="Proc. Natl. Acad. Sci. U.S.A.">
        <title>Molecular genetic basis of allelic polymorphism in malate dehydrogenase (mdh) in natural populations of Escherichia coli and Salmonella enterica.</title>
        <authorList>
            <person name="Boyd E.F."/>
            <person name="Nelson K."/>
            <person name="Wang F.-S."/>
            <person name="Whittam T.S."/>
            <person name="Selander R.K."/>
        </authorList>
    </citation>
    <scope>NUCLEOTIDE SEQUENCE [GENOMIC DNA]</scope>
    <source>
        <strain>S4272</strain>
    </source>
</reference>
<organism>
    <name type="scientific">Salmonella muenchen</name>
    <dbReference type="NCBI Taxonomy" id="596"/>
    <lineage>
        <taxon>Bacteria</taxon>
        <taxon>Pseudomonadati</taxon>
        <taxon>Pseudomonadota</taxon>
        <taxon>Gammaproteobacteria</taxon>
        <taxon>Enterobacterales</taxon>
        <taxon>Enterobacteriaceae</taxon>
        <taxon>Salmonella</taxon>
    </lineage>
</organism>
<comment type="function">
    <text evidence="1">Catalyzes the reversible oxidation of malate to oxaloacetate.</text>
</comment>
<comment type="catalytic activity">
    <reaction evidence="2">
        <text>(S)-malate + NAD(+) = oxaloacetate + NADH + H(+)</text>
        <dbReference type="Rhea" id="RHEA:21432"/>
        <dbReference type="ChEBI" id="CHEBI:15378"/>
        <dbReference type="ChEBI" id="CHEBI:15589"/>
        <dbReference type="ChEBI" id="CHEBI:16452"/>
        <dbReference type="ChEBI" id="CHEBI:57540"/>
        <dbReference type="ChEBI" id="CHEBI:57945"/>
        <dbReference type="EC" id="1.1.1.37"/>
    </reaction>
</comment>
<comment type="subunit">
    <text evidence="1">Homodimer.</text>
</comment>
<comment type="similarity">
    <text evidence="3">Belongs to the LDH/MDH superfamily. MDH type 1 family.</text>
</comment>
<sequence length="283" mass="29503">IGQALALLLKNQLPSGSELSLYDIAPVTPGVAVDLSHIPTAVKIKGFSGEDVTPALEGADVVLISAGVARKPGMDRSDLFNVNAGIVKNLVQQIAKTCPKACVGIITNPVNTTVAIAAEVLKKAGVYDKNKLFGVTTLDIIRSNTFVAELKGKLPTEVEVPVIGGHSGVTILPLLSQIPGVSFTEQEAAELTKRIQNAGTEVVEAKAGGGSATLSMGQAAARFGLSLVRALQGEKDVVECAYVEGDGQYARFFSQPLLLGKNGVEERKSIGTLSAFEQHSLDA</sequence>
<keyword id="KW-0520">NAD</keyword>
<keyword id="KW-0560">Oxidoreductase</keyword>
<keyword id="KW-0816">Tricarboxylic acid cycle</keyword>
<gene>
    <name type="primary">mdh</name>
</gene>
<feature type="chain" id="PRO_0000113321" description="Malate dehydrogenase">
    <location>
        <begin position="1" status="less than"/>
        <end position="283" status="greater than"/>
    </location>
</feature>
<feature type="active site" description="Proton acceptor" evidence="1">
    <location>
        <position position="166"/>
    </location>
</feature>
<feature type="binding site" evidence="1">
    <location>
        <begin position="1" status="less than"/>
        <end position="2"/>
    </location>
    <ligand>
        <name>NAD(+)</name>
        <dbReference type="ChEBI" id="CHEBI:57540"/>
    </ligand>
</feature>
<feature type="binding site" evidence="1">
    <location>
        <position position="23"/>
    </location>
    <ligand>
        <name>NAD(+)</name>
        <dbReference type="ChEBI" id="CHEBI:57540"/>
    </ligand>
</feature>
<feature type="binding site" evidence="2">
    <location>
        <position position="70"/>
    </location>
    <ligand>
        <name>substrate</name>
    </ligand>
</feature>
<feature type="binding site" evidence="2">
    <location>
        <position position="76"/>
    </location>
    <ligand>
        <name>substrate</name>
    </ligand>
</feature>
<feature type="binding site" evidence="1">
    <location>
        <position position="83"/>
    </location>
    <ligand>
        <name>NAD(+)</name>
        <dbReference type="ChEBI" id="CHEBI:57540"/>
    </ligand>
</feature>
<feature type="binding site" evidence="1">
    <location>
        <begin position="106"/>
        <end position="108"/>
    </location>
    <ligand>
        <name>NAD(+)</name>
        <dbReference type="ChEBI" id="CHEBI:57540"/>
    </ligand>
</feature>
<feature type="binding site" evidence="2">
    <location>
        <position position="108"/>
    </location>
    <ligand>
        <name>substrate</name>
    </ligand>
</feature>
<feature type="binding site" evidence="2">
    <location>
        <position position="142"/>
    </location>
    <ligand>
        <name>substrate</name>
    </ligand>
</feature>
<feature type="binding site" evidence="1">
    <location>
        <position position="216"/>
    </location>
    <ligand>
        <name>NAD(+)</name>
        <dbReference type="ChEBI" id="CHEBI:57540"/>
    </ligand>
</feature>
<feature type="non-terminal residue">
    <location>
        <position position="1"/>
    </location>
</feature>
<feature type="non-terminal residue">
    <location>
        <position position="283"/>
    </location>
</feature>
<evidence type="ECO:0000250" key="1"/>
<evidence type="ECO:0000255" key="2">
    <source>
        <dbReference type="PROSITE-ProRule" id="PRU10004"/>
    </source>
</evidence>
<evidence type="ECO:0000305" key="3"/>
<protein>
    <recommendedName>
        <fullName>Malate dehydrogenase</fullName>
        <ecNumber>1.1.1.37</ecNumber>
    </recommendedName>
</protein>
<accession>Q59838</accession>
<dbReference type="EC" id="1.1.1.37"/>
<dbReference type="EMBL" id="U04762">
    <property type="protein sequence ID" value="AAC43750.1"/>
    <property type="molecule type" value="Genomic_DNA"/>
</dbReference>
<dbReference type="SMR" id="Q59838"/>
<dbReference type="GO" id="GO:0005737">
    <property type="term" value="C:cytoplasm"/>
    <property type="evidence" value="ECO:0007669"/>
    <property type="project" value="TreeGrafter"/>
</dbReference>
<dbReference type="GO" id="GO:0030060">
    <property type="term" value="F:L-malate dehydrogenase (NAD+) activity"/>
    <property type="evidence" value="ECO:0007669"/>
    <property type="project" value="UniProtKB-EC"/>
</dbReference>
<dbReference type="GO" id="GO:0006108">
    <property type="term" value="P:malate metabolic process"/>
    <property type="evidence" value="ECO:0007669"/>
    <property type="project" value="InterPro"/>
</dbReference>
<dbReference type="GO" id="GO:0006099">
    <property type="term" value="P:tricarboxylic acid cycle"/>
    <property type="evidence" value="ECO:0007669"/>
    <property type="project" value="UniProtKB-KW"/>
</dbReference>
<dbReference type="CDD" id="cd01337">
    <property type="entry name" value="MDH_glyoxysomal_mitochondrial"/>
    <property type="match status" value="1"/>
</dbReference>
<dbReference type="FunFam" id="3.40.50.720:FF:000017">
    <property type="entry name" value="Malate dehydrogenase"/>
    <property type="match status" value="1"/>
</dbReference>
<dbReference type="FunFam" id="3.90.110.10:FF:000001">
    <property type="entry name" value="Malate dehydrogenase"/>
    <property type="match status" value="1"/>
</dbReference>
<dbReference type="Gene3D" id="3.90.110.10">
    <property type="entry name" value="Lactate dehydrogenase/glycoside hydrolase, family 4, C-terminal"/>
    <property type="match status" value="1"/>
</dbReference>
<dbReference type="Gene3D" id="3.40.50.720">
    <property type="entry name" value="NAD(P)-binding Rossmann-like Domain"/>
    <property type="match status" value="1"/>
</dbReference>
<dbReference type="InterPro" id="IPR001557">
    <property type="entry name" value="L-lactate/malate_DH"/>
</dbReference>
<dbReference type="InterPro" id="IPR022383">
    <property type="entry name" value="Lactate/malate_DH_C"/>
</dbReference>
<dbReference type="InterPro" id="IPR001236">
    <property type="entry name" value="Lactate/malate_DH_N"/>
</dbReference>
<dbReference type="InterPro" id="IPR015955">
    <property type="entry name" value="Lactate_DH/Glyco_Ohase_4_C"/>
</dbReference>
<dbReference type="InterPro" id="IPR001252">
    <property type="entry name" value="Malate_DH_AS"/>
</dbReference>
<dbReference type="InterPro" id="IPR010097">
    <property type="entry name" value="Malate_DH_type1"/>
</dbReference>
<dbReference type="InterPro" id="IPR036291">
    <property type="entry name" value="NAD(P)-bd_dom_sf"/>
</dbReference>
<dbReference type="NCBIfam" id="TIGR01772">
    <property type="entry name" value="MDH_euk_gproteo"/>
    <property type="match status" value="1"/>
</dbReference>
<dbReference type="PANTHER" id="PTHR11540">
    <property type="entry name" value="MALATE AND LACTATE DEHYDROGENASE"/>
    <property type="match status" value="1"/>
</dbReference>
<dbReference type="PANTHER" id="PTHR11540:SF16">
    <property type="entry name" value="MALATE DEHYDROGENASE, MITOCHONDRIAL"/>
    <property type="match status" value="1"/>
</dbReference>
<dbReference type="Pfam" id="PF02866">
    <property type="entry name" value="Ldh_1_C"/>
    <property type="match status" value="1"/>
</dbReference>
<dbReference type="Pfam" id="PF00056">
    <property type="entry name" value="Ldh_1_N"/>
    <property type="match status" value="1"/>
</dbReference>
<dbReference type="PIRSF" id="PIRSF000102">
    <property type="entry name" value="Lac_mal_DH"/>
    <property type="match status" value="1"/>
</dbReference>
<dbReference type="SUPFAM" id="SSF56327">
    <property type="entry name" value="LDH C-terminal domain-like"/>
    <property type="match status" value="1"/>
</dbReference>
<dbReference type="SUPFAM" id="SSF51735">
    <property type="entry name" value="NAD(P)-binding Rossmann-fold domains"/>
    <property type="match status" value="1"/>
</dbReference>
<dbReference type="PROSITE" id="PS00068">
    <property type="entry name" value="MDH"/>
    <property type="match status" value="1"/>
</dbReference>
<proteinExistence type="inferred from homology"/>